<proteinExistence type="evidence at protein level"/>
<reference key="1">
    <citation type="journal article" date="1993" name="Curr. Genet.">
        <title>Molecular cloning and analysis of the nuclear gene MRP-L6 coding for a putative mitochondrial ribosomal protein from Saccharomyces cerevisiae.</title>
        <authorList>
            <person name="Schwank S."/>
            <person name="Harrer R."/>
            <person name="Schueller H.-J."/>
            <person name="Schweizer E."/>
        </authorList>
    </citation>
    <scope>NUCLEOTIDE SEQUENCE [GENOMIC DNA]</scope>
</reference>
<reference key="2">
    <citation type="journal article" date="1994" name="Science">
        <title>Complete nucleotide sequence of Saccharomyces cerevisiae chromosome VIII.</title>
        <authorList>
            <person name="Johnston M."/>
            <person name="Andrews S."/>
            <person name="Brinkman R."/>
            <person name="Cooper J."/>
            <person name="Ding H."/>
            <person name="Dover J."/>
            <person name="Du Z."/>
            <person name="Favello A."/>
            <person name="Fulton L."/>
            <person name="Gattung S."/>
            <person name="Geisel C."/>
            <person name="Kirsten J."/>
            <person name="Kucaba T."/>
            <person name="Hillier L.W."/>
            <person name="Jier M."/>
            <person name="Johnston L."/>
            <person name="Langston Y."/>
            <person name="Latreille P."/>
            <person name="Louis E.J."/>
            <person name="Macri C."/>
            <person name="Mardis E."/>
            <person name="Menezes S."/>
            <person name="Mouser L."/>
            <person name="Nhan M."/>
            <person name="Rifkin L."/>
            <person name="Riles L."/>
            <person name="St Peter H."/>
            <person name="Trevaskis E."/>
            <person name="Vaughan K."/>
            <person name="Vignati D."/>
            <person name="Wilcox L."/>
            <person name="Wohldman P."/>
            <person name="Waterston R."/>
            <person name="Wilson R."/>
            <person name="Vaudin M."/>
        </authorList>
    </citation>
    <scope>NUCLEOTIDE SEQUENCE [LARGE SCALE GENOMIC DNA]</scope>
    <source>
        <strain>ATCC 204508 / S288c</strain>
    </source>
</reference>
<reference key="3">
    <citation type="journal article" date="2014" name="G3 (Bethesda)">
        <title>The reference genome sequence of Saccharomyces cerevisiae: Then and now.</title>
        <authorList>
            <person name="Engel S.R."/>
            <person name="Dietrich F.S."/>
            <person name="Fisk D.G."/>
            <person name="Binkley G."/>
            <person name="Balakrishnan R."/>
            <person name="Costanzo M.C."/>
            <person name="Dwight S.S."/>
            <person name="Hitz B.C."/>
            <person name="Karra K."/>
            <person name="Nash R.S."/>
            <person name="Weng S."/>
            <person name="Wong E.D."/>
            <person name="Lloyd P."/>
            <person name="Skrzypek M.S."/>
            <person name="Miyasato S.R."/>
            <person name="Simison M."/>
            <person name="Cherry J.M."/>
        </authorList>
    </citation>
    <scope>GENOME REANNOTATION</scope>
    <source>
        <strain>ATCC 204508 / S288c</strain>
    </source>
</reference>
<reference key="4">
    <citation type="journal article" date="1997" name="Eur. J. Biochem.">
        <title>Identification and characterization of the genes for mitochondrial ribosomal proteins of Saccharomyces cerevisiae.</title>
        <authorList>
            <person name="Kitakawa M."/>
            <person name="Graack H.-R."/>
            <person name="Grohmann L."/>
            <person name="Goldschmidt-Reisin S."/>
            <person name="Herfurth E."/>
            <person name="Wittmann-Liebold B."/>
            <person name="Nishimura T."/>
            <person name="Isono K."/>
        </authorList>
    </citation>
    <scope>PROTEIN SEQUENCE OF 17-27; 46-59; 63-71; 144-149 AND 198-204</scope>
    <scope>SUBUNIT</scope>
    <source>
        <strain>07173</strain>
    </source>
</reference>
<reference key="5">
    <citation type="journal article" date="2002" name="Eur. J. Biochem.">
        <title>Tag-mediated isolation of yeast mitochondrial ribosome and mass spectrometric identification of its new components.</title>
        <authorList>
            <person name="Gan X."/>
            <person name="Kitakawa M."/>
            <person name="Yoshino K."/>
            <person name="Oshiro N."/>
            <person name="Yonezawa K."/>
            <person name="Isono K."/>
        </authorList>
    </citation>
    <scope>IDENTIFICATION IN THE MITOCHONDRIAL RIBOSOMAL LARGE COMPLEX</scope>
    <scope>IDENTIFICATION BY MASS SPECTROMETRY</scope>
</reference>
<reference key="6">
    <citation type="journal article" date="2003" name="Nature">
        <title>Global analysis of protein expression in yeast.</title>
        <authorList>
            <person name="Ghaemmaghami S."/>
            <person name="Huh W.-K."/>
            <person name="Bower K."/>
            <person name="Howson R.W."/>
            <person name="Belle A."/>
            <person name="Dephoure N."/>
            <person name="O'Shea E.K."/>
            <person name="Weissman J.S."/>
        </authorList>
    </citation>
    <scope>LEVEL OF PROTEIN EXPRESSION [LARGE SCALE ANALYSIS]</scope>
</reference>
<reference key="7">
    <citation type="journal article" date="2003" name="Proc. Natl. Acad. Sci. U.S.A.">
        <title>The proteome of Saccharomyces cerevisiae mitochondria.</title>
        <authorList>
            <person name="Sickmann A."/>
            <person name="Reinders J."/>
            <person name="Wagner Y."/>
            <person name="Joppich C."/>
            <person name="Zahedi R.P."/>
            <person name="Meyer H.E."/>
            <person name="Schoenfisch B."/>
            <person name="Perschil I."/>
            <person name="Chacinska A."/>
            <person name="Guiard B."/>
            <person name="Rehling P."/>
            <person name="Pfanner N."/>
            <person name="Meisinger C."/>
        </authorList>
    </citation>
    <scope>SUBCELLULAR LOCATION [LARGE SCALE ANALYSIS]</scope>
    <source>
        <strain>ATCC 76625 / YPH499</strain>
    </source>
</reference>
<reference key="8">
    <citation type="journal article" date="2015" name="Nat. Commun.">
        <title>Organization of the mitochondrial translation machinery studied in situ by cryoelectron tomography.</title>
        <authorList>
            <person name="Pfeffer S."/>
            <person name="Woellhaf M.W."/>
            <person name="Herrmann J.M."/>
            <person name="Forster F."/>
        </authorList>
    </citation>
    <scope>SUBCELLULAR LOCATION</scope>
</reference>
<reference key="9">
    <citation type="journal article" date="2014" name="Science">
        <title>Structure of the yeast mitochondrial large ribosomal subunit.</title>
        <authorList>
            <person name="Amunts A."/>
            <person name="Brown A."/>
            <person name="Bai X.C."/>
            <person name="Llacer J.L."/>
            <person name="Hussain T."/>
            <person name="Emsley P."/>
            <person name="Long F."/>
            <person name="Murshudov G."/>
            <person name="Scheres S.H."/>
            <person name="Ramakrishnan V."/>
        </authorList>
    </citation>
    <scope>STRUCTURE BY ELECTRON MICROSCOPY (3.20 ANGSTROMS)</scope>
    <scope>SUBUNIT</scope>
</reference>
<organism>
    <name type="scientific">Saccharomyces cerevisiae (strain ATCC 204508 / S288c)</name>
    <name type="common">Baker's yeast</name>
    <dbReference type="NCBI Taxonomy" id="559292"/>
    <lineage>
        <taxon>Eukaryota</taxon>
        <taxon>Fungi</taxon>
        <taxon>Dikarya</taxon>
        <taxon>Ascomycota</taxon>
        <taxon>Saccharomycotina</taxon>
        <taxon>Saccharomycetes</taxon>
        <taxon>Saccharomycetales</taxon>
        <taxon>Saccharomycetaceae</taxon>
        <taxon>Saccharomyces</taxon>
    </lineage>
</organism>
<name>RM06_YEAST</name>
<keyword id="KW-0002">3D-structure</keyword>
<keyword id="KW-0903">Direct protein sequencing</keyword>
<keyword id="KW-0496">Mitochondrion</keyword>
<keyword id="KW-1185">Reference proteome</keyword>
<keyword id="KW-0687">Ribonucleoprotein</keyword>
<keyword id="KW-0689">Ribosomal protein</keyword>
<keyword id="KW-0694">RNA-binding</keyword>
<keyword id="KW-0699">rRNA-binding</keyword>
<keyword id="KW-0809">Transit peptide</keyword>
<accession>P32904</accession>
<accession>D3DL96</accession>
<protein>
    <recommendedName>
        <fullName evidence="7">Large ribosomal subunit protein uL6m</fullName>
    </recommendedName>
    <alternativeName>
        <fullName>54S ribosomal protein L6, mitochondrial</fullName>
    </alternativeName>
    <alternativeName>
        <fullName>YmL16</fullName>
    </alternativeName>
</protein>
<sequence>MSFIQRRLLSQTLFLRSQVGSLPLYISPEVQVSINALSMPRIIRKGRTSMNISQNITVKGPKGELSVEVPDFLHLDKDEKHGKINVTVQNSEDKHQRSMWGTVRSLINNHIIGVTEGHLAVLRFVGTGYRAQLENDGKFVNVKVGASIKQGLDVPEGIVVKTPAPTSLIIEGCNKQQVLLFAAKLRKFHPPEPYKGKGIYVNDETIKLKDKKIK</sequence>
<gene>
    <name type="primary">MRPL6</name>
    <name type="ordered locus">YHR147C</name>
</gene>
<evidence type="ECO:0000269" key="1">
    <source>
    </source>
</evidence>
<evidence type="ECO:0000269" key="2">
    <source>
    </source>
</evidence>
<evidence type="ECO:0000269" key="3">
    <source>
    </source>
</evidence>
<evidence type="ECO:0000269" key="4">
    <source>
    </source>
</evidence>
<evidence type="ECO:0000269" key="5">
    <source>
    </source>
</evidence>
<evidence type="ECO:0000269" key="6">
    <source>
    </source>
</evidence>
<evidence type="ECO:0000303" key="7">
    <source>
    </source>
</evidence>
<evidence type="ECO:0000305" key="8"/>
<evidence type="ECO:0000305" key="9">
    <source>
    </source>
</evidence>
<evidence type="ECO:0000305" key="10">
    <source>
    </source>
</evidence>
<dbReference type="EMBL" id="X69480">
    <property type="protein sequence ID" value="CAA49236.1"/>
    <property type="molecule type" value="Genomic_DNA"/>
</dbReference>
<dbReference type="EMBL" id="U10397">
    <property type="protein sequence ID" value="AAB68986.1"/>
    <property type="molecule type" value="Genomic_DNA"/>
</dbReference>
<dbReference type="EMBL" id="BK006934">
    <property type="protein sequence ID" value="DAA06840.1"/>
    <property type="molecule type" value="Genomic_DNA"/>
</dbReference>
<dbReference type="PIR" id="S46764">
    <property type="entry name" value="S46764"/>
</dbReference>
<dbReference type="RefSeq" id="NP_012017.1">
    <property type="nucleotide sequence ID" value="NM_001179278.1"/>
</dbReference>
<dbReference type="PDB" id="3J6B">
    <property type="method" value="EM"/>
    <property type="resolution" value="3.20 A"/>
    <property type="chains" value="F=1-214"/>
</dbReference>
<dbReference type="PDB" id="5MRC">
    <property type="method" value="EM"/>
    <property type="resolution" value="3.25 A"/>
    <property type="chains" value="F=17-212"/>
</dbReference>
<dbReference type="PDB" id="5MRE">
    <property type="method" value="EM"/>
    <property type="resolution" value="3.75 A"/>
    <property type="chains" value="F=17-212"/>
</dbReference>
<dbReference type="PDB" id="5MRF">
    <property type="method" value="EM"/>
    <property type="resolution" value="4.97 A"/>
    <property type="chains" value="F=17-212"/>
</dbReference>
<dbReference type="PDBsum" id="3J6B"/>
<dbReference type="PDBsum" id="5MRC"/>
<dbReference type="PDBsum" id="5MRE"/>
<dbReference type="PDBsum" id="5MRF"/>
<dbReference type="EMDB" id="EMD-3551"/>
<dbReference type="EMDB" id="EMD-3552"/>
<dbReference type="EMDB" id="EMD-3553"/>
<dbReference type="SMR" id="P32904"/>
<dbReference type="BioGRID" id="36581">
    <property type="interactions" value="301"/>
</dbReference>
<dbReference type="ComplexPortal" id="CPX-1602">
    <property type="entry name" value="54S mitochondrial large ribosomal subunit"/>
</dbReference>
<dbReference type="DIP" id="DIP-5622N"/>
<dbReference type="FunCoup" id="P32904">
    <property type="interactions" value="898"/>
</dbReference>
<dbReference type="IntAct" id="P32904">
    <property type="interactions" value="61"/>
</dbReference>
<dbReference type="STRING" id="4932.YHR147C"/>
<dbReference type="iPTMnet" id="P32904"/>
<dbReference type="PaxDb" id="4932-YHR147C"/>
<dbReference type="PeptideAtlas" id="P32904"/>
<dbReference type="EnsemblFungi" id="YHR147C_mRNA">
    <property type="protein sequence ID" value="YHR147C"/>
    <property type="gene ID" value="YHR147C"/>
</dbReference>
<dbReference type="GeneID" id="856552"/>
<dbReference type="KEGG" id="sce:YHR147C"/>
<dbReference type="AGR" id="SGD:S000001190"/>
<dbReference type="SGD" id="S000001190">
    <property type="gene designation" value="MRPL6"/>
</dbReference>
<dbReference type="VEuPathDB" id="FungiDB:YHR147C"/>
<dbReference type="eggNOG" id="KOG3254">
    <property type="taxonomic scope" value="Eukaryota"/>
</dbReference>
<dbReference type="GeneTree" id="ENSGT00390000015224"/>
<dbReference type="HOGENOM" id="CLU_065464_1_0_1"/>
<dbReference type="InParanoid" id="P32904"/>
<dbReference type="OMA" id="RERHGLC"/>
<dbReference type="OrthoDB" id="540873at2759"/>
<dbReference type="BioCyc" id="YEAST:G3O-31182-MONOMER"/>
<dbReference type="BioGRID-ORCS" id="856552">
    <property type="hits" value="5 hits in 10 CRISPR screens"/>
</dbReference>
<dbReference type="PRO" id="PR:P32904"/>
<dbReference type="Proteomes" id="UP000002311">
    <property type="component" value="Chromosome VIII"/>
</dbReference>
<dbReference type="RNAct" id="P32904">
    <property type="molecule type" value="protein"/>
</dbReference>
<dbReference type="GO" id="GO:0005743">
    <property type="term" value="C:mitochondrial inner membrane"/>
    <property type="evidence" value="ECO:0000303"/>
    <property type="project" value="ComplexPortal"/>
</dbReference>
<dbReference type="GO" id="GO:0005762">
    <property type="term" value="C:mitochondrial large ribosomal subunit"/>
    <property type="evidence" value="ECO:0000314"/>
    <property type="project" value="SGD"/>
</dbReference>
<dbReference type="GO" id="GO:0005739">
    <property type="term" value="C:mitochondrion"/>
    <property type="evidence" value="ECO:0007005"/>
    <property type="project" value="SGD"/>
</dbReference>
<dbReference type="GO" id="GO:0019843">
    <property type="term" value="F:rRNA binding"/>
    <property type="evidence" value="ECO:0007669"/>
    <property type="project" value="UniProtKB-KW"/>
</dbReference>
<dbReference type="GO" id="GO:0003735">
    <property type="term" value="F:structural constituent of ribosome"/>
    <property type="evidence" value="ECO:0000314"/>
    <property type="project" value="SGD"/>
</dbReference>
<dbReference type="GO" id="GO:0032543">
    <property type="term" value="P:mitochondrial translation"/>
    <property type="evidence" value="ECO:0000303"/>
    <property type="project" value="ComplexPortal"/>
</dbReference>
<dbReference type="FunFam" id="3.90.930.12:FF:000006">
    <property type="entry name" value="50S ribosomal protein L6"/>
    <property type="match status" value="1"/>
</dbReference>
<dbReference type="FunFam" id="3.90.930.12:FF:000009">
    <property type="entry name" value="60S ribosomal protein L6"/>
    <property type="match status" value="1"/>
</dbReference>
<dbReference type="Gene3D" id="3.90.930.12">
    <property type="entry name" value="Ribosomal protein L6, alpha-beta domain"/>
    <property type="match status" value="2"/>
</dbReference>
<dbReference type="InterPro" id="IPR000702">
    <property type="entry name" value="Ribosomal_uL6-like"/>
</dbReference>
<dbReference type="InterPro" id="IPR036789">
    <property type="entry name" value="Ribosomal_uL6-like_a/b-dom_sf"/>
</dbReference>
<dbReference type="InterPro" id="IPR020040">
    <property type="entry name" value="Ribosomal_uL6_a/b-dom"/>
</dbReference>
<dbReference type="InterPro" id="IPR019906">
    <property type="entry name" value="Ribosomal_uL6_bac-type"/>
</dbReference>
<dbReference type="InterPro" id="IPR002358">
    <property type="entry name" value="Ribosomal_uL6_CS"/>
</dbReference>
<dbReference type="PANTHER" id="PTHR11655">
    <property type="entry name" value="60S/50S RIBOSOMAL PROTEIN L6/L9"/>
    <property type="match status" value="1"/>
</dbReference>
<dbReference type="PANTHER" id="PTHR11655:SF14">
    <property type="entry name" value="LARGE RIBOSOMAL SUBUNIT PROTEIN UL6M"/>
    <property type="match status" value="1"/>
</dbReference>
<dbReference type="Pfam" id="PF00347">
    <property type="entry name" value="Ribosomal_L6"/>
    <property type="match status" value="2"/>
</dbReference>
<dbReference type="PIRSF" id="PIRSF002162">
    <property type="entry name" value="Ribosomal_L6"/>
    <property type="match status" value="1"/>
</dbReference>
<dbReference type="PRINTS" id="PR00059">
    <property type="entry name" value="RIBOSOMALL6"/>
</dbReference>
<dbReference type="SUPFAM" id="SSF56053">
    <property type="entry name" value="Ribosomal protein L6"/>
    <property type="match status" value="2"/>
</dbReference>
<dbReference type="PROSITE" id="PS00525">
    <property type="entry name" value="RIBOSOMAL_L6_1"/>
    <property type="match status" value="1"/>
</dbReference>
<comment type="function">
    <text evidence="9 10">Component of the mitochondrial ribosome (mitoribosome), a dedicated translation machinery responsible for the synthesis of mitochondrial genome-encoded proteins, including at least some of the essential transmembrane subunits of the mitochondrial respiratory chain. The mitoribosomes are attached to the mitochondrial inner membrane and translation products are cotranslationally integrated into the membrane.</text>
</comment>
<comment type="subunit">
    <text evidence="1 4 6">Component of the mitochondrial large ribosomal subunit (mt-LSU). Mature yeast 74S mitochondrial ribosomes consist of a small (37S) and a large (54S) subunit. The 37S small subunit contains a 15S ribosomal RNA (15S mt-rRNA) and 34 different proteins. The 54S large subunit contains a 21S rRNA (21S mt-rRNA) and 46 different proteins.</text>
</comment>
<comment type="subcellular location">
    <subcellularLocation>
        <location evidence="3">Mitochondrion</location>
    </subcellularLocation>
    <text evidence="5">Mitoribosomes are tethered to the mitochondrial inner membrane and spatially aligned with the membrane insertion machinery through two distinct membrane contact sites, formed by the 21S rRNA expansion segment 96-ES1 and the inner membrane protein MBA1.</text>
</comment>
<comment type="miscellaneous">
    <text evidence="2">Present with 5700 molecules/cell in log phase SD medium.</text>
</comment>
<comment type="similarity">
    <text evidence="8">Belongs to the universal ribosomal protein uL6 family.</text>
</comment>
<feature type="transit peptide" description="Mitochondrion" evidence="6">
    <location>
        <begin position="1"/>
        <end position="16"/>
    </location>
</feature>
<feature type="chain" id="PRO_0000030546" description="Large ribosomal subunit protein uL6m">
    <location>
        <begin position="17"/>
        <end position="214"/>
    </location>
</feature>
<feature type="sequence conflict" description="In Ref. 4; AA sequence." evidence="8" ref="4">
    <original>V</original>
    <variation>P</variation>
    <location>
        <position position="19"/>
    </location>
</feature>
<feature type="sequence conflict" description="In Ref. 4; AA sequence." evidence="8" ref="4">
    <original>S</original>
    <variation>K</variation>
    <location>
        <position position="27"/>
    </location>
</feature>
<feature type="sequence conflict" description="In Ref. 1; CAA49236." evidence="8" ref="1">
    <original>VNDETIKLKDKKIK</original>
    <variation>GTVKQ</variation>
    <location>
        <begin position="201"/>
        <end position="214"/>
    </location>
</feature>